<reference key="1">
    <citation type="submission" date="2007-05" db="EMBL/GenBank/DDBJ databases">
        <title>Complete sequence of Thermotoga petrophila RKU-1.</title>
        <authorList>
            <consortium name="US DOE Joint Genome Institute"/>
            <person name="Copeland A."/>
            <person name="Lucas S."/>
            <person name="Lapidus A."/>
            <person name="Barry K."/>
            <person name="Glavina del Rio T."/>
            <person name="Dalin E."/>
            <person name="Tice H."/>
            <person name="Pitluck S."/>
            <person name="Sims D."/>
            <person name="Brettin T."/>
            <person name="Bruce D."/>
            <person name="Detter J.C."/>
            <person name="Han C."/>
            <person name="Tapia R."/>
            <person name="Schmutz J."/>
            <person name="Larimer F."/>
            <person name="Land M."/>
            <person name="Hauser L."/>
            <person name="Kyrpides N."/>
            <person name="Mikhailova N."/>
            <person name="Nelson K."/>
            <person name="Gogarten J.P."/>
            <person name="Noll K."/>
            <person name="Richardson P."/>
        </authorList>
    </citation>
    <scope>NUCLEOTIDE SEQUENCE [LARGE SCALE GENOMIC DNA]</scope>
    <source>
        <strain>ATCC BAA-488 / DSM 13995 / JCM 10881 / RKU-1</strain>
    </source>
</reference>
<comment type="function">
    <text evidence="1">Catalyzes the attachment of isoleucine to tRNA(Ile). As IleRS can inadvertently accommodate and process structurally similar amino acids such as valine, to avoid such errors it has two additional distinct tRNA(Ile)-dependent editing activities. One activity is designated as 'pretransfer' editing and involves the hydrolysis of activated Val-AMP. The other activity is designated 'posttransfer' editing and involves deacylation of mischarged Val-tRNA(Ile).</text>
</comment>
<comment type="catalytic activity">
    <reaction evidence="1">
        <text>tRNA(Ile) + L-isoleucine + ATP = L-isoleucyl-tRNA(Ile) + AMP + diphosphate</text>
        <dbReference type="Rhea" id="RHEA:11060"/>
        <dbReference type="Rhea" id="RHEA-COMP:9666"/>
        <dbReference type="Rhea" id="RHEA-COMP:9695"/>
        <dbReference type="ChEBI" id="CHEBI:30616"/>
        <dbReference type="ChEBI" id="CHEBI:33019"/>
        <dbReference type="ChEBI" id="CHEBI:58045"/>
        <dbReference type="ChEBI" id="CHEBI:78442"/>
        <dbReference type="ChEBI" id="CHEBI:78528"/>
        <dbReference type="ChEBI" id="CHEBI:456215"/>
        <dbReference type="EC" id="6.1.1.5"/>
    </reaction>
</comment>
<comment type="cofactor">
    <cofactor evidence="1">
        <name>Zn(2+)</name>
        <dbReference type="ChEBI" id="CHEBI:29105"/>
    </cofactor>
    <text evidence="1">Binds 1 zinc ion per subunit.</text>
</comment>
<comment type="subunit">
    <text evidence="1">Monomer.</text>
</comment>
<comment type="subcellular location">
    <subcellularLocation>
        <location evidence="1">Cytoplasm</location>
    </subcellularLocation>
</comment>
<comment type="domain">
    <text evidence="1">IleRS has two distinct active sites: one for aminoacylation and one for editing. The misactivated valine is translocated from the active site to the editing site, which sterically excludes the correctly activated isoleucine. The single editing site contains two valyl binding pockets, one specific for each substrate (Val-AMP or Val-tRNA(Ile)).</text>
</comment>
<comment type="similarity">
    <text evidence="1">Belongs to the class-I aminoacyl-tRNA synthetase family. IleS type 1 subfamily.</text>
</comment>
<name>SYI_THEP1</name>
<evidence type="ECO:0000255" key="1">
    <source>
        <dbReference type="HAMAP-Rule" id="MF_02002"/>
    </source>
</evidence>
<organism>
    <name type="scientific">Thermotoga petrophila (strain ATCC BAA-488 / DSM 13995 / JCM 10881 / RKU-1)</name>
    <dbReference type="NCBI Taxonomy" id="390874"/>
    <lineage>
        <taxon>Bacteria</taxon>
        <taxon>Thermotogati</taxon>
        <taxon>Thermotogota</taxon>
        <taxon>Thermotogae</taxon>
        <taxon>Thermotogales</taxon>
        <taxon>Thermotogaceae</taxon>
        <taxon>Thermotoga</taxon>
    </lineage>
</organism>
<proteinExistence type="inferred from homology"/>
<sequence>MDYKNTLNLPKTSFPMKANLVNKEKVFLEEWEKMDLYNYVLEQRKGKPLFVLHDGPPYANGHIHIGTALNKILKDIVVKYKTMRGYRAPYVPGWDTHGLPIEHRVSQELGEKIKEMSPAEIRKKCEEFALRFVDIQREEFKRLGVRGDWENPYITLKPDYEVKILDVFKTLVEEGNVYRSLKPIYWCPRCRTALAEAEIEYHDHKSPSIYVKFRSKEDPNFFIVIWTTTPWTLPANVGIALHPDYEYSVVKVGEEKWVIATDLLDAFSKETGIDCSNVVEKIKGKDLEGKEFVHPIFDDKTSRVILADYVSLETGTGCVHIAPGHGEEDYIYGHVQYGLPIVSPVDEEGRFTEEAGKYKGMFIEDANEVIIEDLKKKGILVHASSITHSYPHCWRCKGPVIFRATEQWFISVDHNNLRQKVLEEIDKVKWIPEWGRNRIRSMVEERPDWCISRQRVWGTPIPAVKCKECGEVTLDPKVIEHFMKIVEKEGTNAWFEKEVEELIPEDFVCPKCGKRSFEKMLDTLDVWIDSGASFEYITTKREDHPFPLDMYLEGSDQHRGWFHSSIFLAVAKRGSAPYKEVLTHGFIKDEQGRKMSKSLGNVVDPMEVVEKYGAEILRLWLASSDYFNDIKISMRIVEQQTEVYRKIRNTFRFLLGNLEGFDPELDRVPYEKLLTIDRWALGRLQEIIKRATEYYDSYEFSKVYNLVVKYCTTELSSLYLDVVKDRLYVEAKDSIYRRSAQTVMHEILIALMKILAPIMTFTMEEVYSHLHEKDRKYKTVQAEYWPEYKEEFIDRELMEDFEKLLSIREDVLKALEEKRQQDVIGHSLDAEVVLVPKNDTIKALLEKYRDILEELFIVSKVSLSDASGELKGELVEVTVKHAEGEKCQRCWKYTTEISTSEDFPGVCPRCLAVLKGERK</sequence>
<feature type="chain" id="PRO_1000022138" description="Isoleucine--tRNA ligase">
    <location>
        <begin position="1"/>
        <end position="919"/>
    </location>
</feature>
<feature type="short sequence motif" description="'HIGH' region">
    <location>
        <begin position="57"/>
        <end position="67"/>
    </location>
</feature>
<feature type="short sequence motif" description="'KMSKS' region">
    <location>
        <begin position="594"/>
        <end position="598"/>
    </location>
</feature>
<feature type="binding site" evidence="1">
    <location>
        <position position="553"/>
    </location>
    <ligand>
        <name>L-isoleucyl-5'-AMP</name>
        <dbReference type="ChEBI" id="CHEBI:178002"/>
    </ligand>
</feature>
<feature type="binding site" evidence="1">
    <location>
        <position position="597"/>
    </location>
    <ligand>
        <name>ATP</name>
        <dbReference type="ChEBI" id="CHEBI:30616"/>
    </ligand>
</feature>
<feature type="binding site" evidence="1">
    <location>
        <position position="887"/>
    </location>
    <ligand>
        <name>Zn(2+)</name>
        <dbReference type="ChEBI" id="CHEBI:29105"/>
    </ligand>
</feature>
<feature type="binding site" evidence="1">
    <location>
        <position position="890"/>
    </location>
    <ligand>
        <name>Zn(2+)</name>
        <dbReference type="ChEBI" id="CHEBI:29105"/>
    </ligand>
</feature>
<feature type="binding site" evidence="1">
    <location>
        <position position="907"/>
    </location>
    <ligand>
        <name>Zn(2+)</name>
        <dbReference type="ChEBI" id="CHEBI:29105"/>
    </ligand>
</feature>
<feature type="binding site" evidence="1">
    <location>
        <position position="910"/>
    </location>
    <ligand>
        <name>Zn(2+)</name>
        <dbReference type="ChEBI" id="CHEBI:29105"/>
    </ligand>
</feature>
<accession>A5IML2</accession>
<protein>
    <recommendedName>
        <fullName evidence="1">Isoleucine--tRNA ligase</fullName>
        <ecNumber evidence="1">6.1.1.5</ecNumber>
    </recommendedName>
    <alternativeName>
        <fullName evidence="1">Isoleucyl-tRNA synthetase</fullName>
        <shortName evidence="1">IleRS</shortName>
    </alternativeName>
</protein>
<gene>
    <name evidence="1" type="primary">ileS</name>
    <name type="ordered locus">Tpet_1422</name>
</gene>
<keyword id="KW-0030">Aminoacyl-tRNA synthetase</keyword>
<keyword id="KW-0067">ATP-binding</keyword>
<keyword id="KW-0963">Cytoplasm</keyword>
<keyword id="KW-0436">Ligase</keyword>
<keyword id="KW-0479">Metal-binding</keyword>
<keyword id="KW-0547">Nucleotide-binding</keyword>
<keyword id="KW-0648">Protein biosynthesis</keyword>
<keyword id="KW-0862">Zinc</keyword>
<dbReference type="EC" id="6.1.1.5" evidence="1"/>
<dbReference type="EMBL" id="CP000702">
    <property type="protein sequence ID" value="ABQ47435.1"/>
    <property type="molecule type" value="Genomic_DNA"/>
</dbReference>
<dbReference type="RefSeq" id="WP_011943889.1">
    <property type="nucleotide sequence ID" value="NC_009486.1"/>
</dbReference>
<dbReference type="SMR" id="A5IML2"/>
<dbReference type="STRING" id="390874.Tpet_1422"/>
<dbReference type="KEGG" id="tpt:Tpet_1422"/>
<dbReference type="eggNOG" id="COG0060">
    <property type="taxonomic scope" value="Bacteria"/>
</dbReference>
<dbReference type="HOGENOM" id="CLU_001493_7_0_0"/>
<dbReference type="Proteomes" id="UP000006558">
    <property type="component" value="Chromosome"/>
</dbReference>
<dbReference type="GO" id="GO:0005829">
    <property type="term" value="C:cytosol"/>
    <property type="evidence" value="ECO:0007669"/>
    <property type="project" value="TreeGrafter"/>
</dbReference>
<dbReference type="GO" id="GO:0002161">
    <property type="term" value="F:aminoacyl-tRNA deacylase activity"/>
    <property type="evidence" value="ECO:0007669"/>
    <property type="project" value="InterPro"/>
</dbReference>
<dbReference type="GO" id="GO:0005524">
    <property type="term" value="F:ATP binding"/>
    <property type="evidence" value="ECO:0007669"/>
    <property type="project" value="UniProtKB-UniRule"/>
</dbReference>
<dbReference type="GO" id="GO:0004822">
    <property type="term" value="F:isoleucine-tRNA ligase activity"/>
    <property type="evidence" value="ECO:0007669"/>
    <property type="project" value="UniProtKB-UniRule"/>
</dbReference>
<dbReference type="GO" id="GO:0000049">
    <property type="term" value="F:tRNA binding"/>
    <property type="evidence" value="ECO:0007669"/>
    <property type="project" value="InterPro"/>
</dbReference>
<dbReference type="GO" id="GO:0008270">
    <property type="term" value="F:zinc ion binding"/>
    <property type="evidence" value="ECO:0007669"/>
    <property type="project" value="UniProtKB-UniRule"/>
</dbReference>
<dbReference type="GO" id="GO:0006428">
    <property type="term" value="P:isoleucyl-tRNA aminoacylation"/>
    <property type="evidence" value="ECO:0007669"/>
    <property type="project" value="UniProtKB-UniRule"/>
</dbReference>
<dbReference type="CDD" id="cd07960">
    <property type="entry name" value="Anticodon_Ia_Ile_BEm"/>
    <property type="match status" value="1"/>
</dbReference>
<dbReference type="CDD" id="cd00818">
    <property type="entry name" value="IleRS_core"/>
    <property type="match status" value="1"/>
</dbReference>
<dbReference type="FunFam" id="1.10.10.830:FF:000008">
    <property type="entry name" value="Isoleucine--tRNA ligase"/>
    <property type="match status" value="1"/>
</dbReference>
<dbReference type="FunFam" id="1.10.730.20:FF:000001">
    <property type="entry name" value="Isoleucine--tRNA ligase"/>
    <property type="match status" value="1"/>
</dbReference>
<dbReference type="FunFam" id="3.40.50.620:FF:000152">
    <property type="entry name" value="Isoleucine--tRNA ligase"/>
    <property type="match status" value="1"/>
</dbReference>
<dbReference type="Gene3D" id="1.10.730.20">
    <property type="match status" value="1"/>
</dbReference>
<dbReference type="Gene3D" id="3.40.50.620">
    <property type="entry name" value="HUPs"/>
    <property type="match status" value="2"/>
</dbReference>
<dbReference type="Gene3D" id="1.10.10.830">
    <property type="entry name" value="Ile-tRNA synthetase CP2 domain-like"/>
    <property type="match status" value="1"/>
</dbReference>
<dbReference type="HAMAP" id="MF_02002">
    <property type="entry name" value="Ile_tRNA_synth_type1"/>
    <property type="match status" value="1"/>
</dbReference>
<dbReference type="InterPro" id="IPR001412">
    <property type="entry name" value="aa-tRNA-synth_I_CS"/>
</dbReference>
<dbReference type="InterPro" id="IPR002300">
    <property type="entry name" value="aa-tRNA-synth_Ia"/>
</dbReference>
<dbReference type="InterPro" id="IPR033708">
    <property type="entry name" value="Anticodon_Ile_BEm"/>
</dbReference>
<dbReference type="InterPro" id="IPR002301">
    <property type="entry name" value="Ile-tRNA-ligase"/>
</dbReference>
<dbReference type="InterPro" id="IPR023585">
    <property type="entry name" value="Ile-tRNA-ligase_type1"/>
</dbReference>
<dbReference type="InterPro" id="IPR050081">
    <property type="entry name" value="Ile-tRNA_ligase"/>
</dbReference>
<dbReference type="InterPro" id="IPR013155">
    <property type="entry name" value="M/V/L/I-tRNA-synth_anticd-bd"/>
</dbReference>
<dbReference type="InterPro" id="IPR014729">
    <property type="entry name" value="Rossmann-like_a/b/a_fold"/>
</dbReference>
<dbReference type="InterPro" id="IPR009080">
    <property type="entry name" value="tRNAsynth_Ia_anticodon-bd"/>
</dbReference>
<dbReference type="InterPro" id="IPR009008">
    <property type="entry name" value="Val/Leu/Ile-tRNA-synth_edit"/>
</dbReference>
<dbReference type="InterPro" id="IPR010663">
    <property type="entry name" value="Znf_FPG/IleRS"/>
</dbReference>
<dbReference type="NCBIfam" id="TIGR00392">
    <property type="entry name" value="ileS"/>
    <property type="match status" value="1"/>
</dbReference>
<dbReference type="PANTHER" id="PTHR42765:SF1">
    <property type="entry name" value="ISOLEUCINE--TRNA LIGASE, MITOCHONDRIAL"/>
    <property type="match status" value="1"/>
</dbReference>
<dbReference type="PANTHER" id="PTHR42765">
    <property type="entry name" value="SOLEUCYL-TRNA SYNTHETASE"/>
    <property type="match status" value="1"/>
</dbReference>
<dbReference type="Pfam" id="PF08264">
    <property type="entry name" value="Anticodon_1"/>
    <property type="match status" value="1"/>
</dbReference>
<dbReference type="Pfam" id="PF00133">
    <property type="entry name" value="tRNA-synt_1"/>
    <property type="match status" value="1"/>
</dbReference>
<dbReference type="Pfam" id="PF06827">
    <property type="entry name" value="zf-FPG_IleRS"/>
    <property type="match status" value="1"/>
</dbReference>
<dbReference type="PRINTS" id="PR00984">
    <property type="entry name" value="TRNASYNTHILE"/>
</dbReference>
<dbReference type="SUPFAM" id="SSF47323">
    <property type="entry name" value="Anticodon-binding domain of a subclass of class I aminoacyl-tRNA synthetases"/>
    <property type="match status" value="1"/>
</dbReference>
<dbReference type="SUPFAM" id="SSF52374">
    <property type="entry name" value="Nucleotidylyl transferase"/>
    <property type="match status" value="1"/>
</dbReference>
<dbReference type="SUPFAM" id="SSF50677">
    <property type="entry name" value="ValRS/IleRS/LeuRS editing domain"/>
    <property type="match status" value="1"/>
</dbReference>
<dbReference type="PROSITE" id="PS00178">
    <property type="entry name" value="AA_TRNA_LIGASE_I"/>
    <property type="match status" value="1"/>
</dbReference>